<organism>
    <name type="scientific">Trichophyton tonsurans</name>
    <name type="common">Scalp ringworm fungus</name>
    <dbReference type="NCBI Taxonomy" id="34387"/>
    <lineage>
        <taxon>Eukaryota</taxon>
        <taxon>Fungi</taxon>
        <taxon>Dikarya</taxon>
        <taxon>Ascomycota</taxon>
        <taxon>Pezizomycotina</taxon>
        <taxon>Eurotiomycetes</taxon>
        <taxon>Eurotiomycetidae</taxon>
        <taxon>Onygenales</taxon>
        <taxon>Arthrodermataceae</taxon>
        <taxon>Trichophyton</taxon>
    </lineage>
</organism>
<accession>A5YCB9</accession>
<reference key="1">
    <citation type="journal article" date="2007" name="J. Clin. Microbiol.">
        <title>Multilocus genotyping identifies infections by multiple strains of Trichophyton tonsurans.</title>
        <authorList>
            <person name="Abdel-Rahman S.M."/>
            <person name="Preuett B.L."/>
            <person name="Gaedigk A."/>
        </authorList>
    </citation>
    <scope>NUCLEOTIDE SEQUENCE [GENOMIC DNA]</scope>
</reference>
<protein>
    <recommendedName>
        <fullName>Extracellular metalloproteinase 5</fullName>
        <ecNumber>3.4.24.-</ecNumber>
    </recommendedName>
    <alternativeName>
        <fullName>Fungalysin MEP5</fullName>
    </alternativeName>
</protein>
<gene>
    <name type="primary">MEP5</name>
</gene>
<name>MEP5_TRITO</name>
<sequence length="608" mass="67308">MHGLLLAAAGLLSLPLHVIAHPQPSTNLAGRGVDLDAYRMADRSSYMNSDDMKLKQPGIASLSGGNYVDTATEVVKRMVPGMTFRMVDDHYVGESGISHVYFRQTMHGMDIDNSDFNVNIGKDGKVLSFGHSFYTGPAPDKAPVEKRDFSDPMKAFHGACKALNLPINADKATVQTMNEHEVMFMGTSGAMSDPQGKLCYMAKEDGTLALTWRVETDMGDNWLLSYVDAKETEKVHNVVDYVSHATYQVYRWPIPDPTEGKRETIENPWNLKTSPFTWISDGKTNYTTTRGNNAIAQANFDGGEDYLNNHRPNNKNLKFEYPYAPNMSPKSYIDASVTQLFYSANMVHDLYYMLGFTEKAGNFQVNNHGQGGKGNDFVILNAQDGSGTNNANFATPPDGKPGRMRVYIWTKAKPARDSSFEAGTVIHEYTHGLSNRLTGGPANAGCLNGMESGGMGEGWGDFFATAIRLKPNDNRNANYVHGEWVNNSPKGNRMYPYSTSLQTNPLVYTSCNKYNEVHAIGTVWGSMLYEVLWNLIDKHGKNDGPTPVFENGVPKDGKYLAMKLVMDGMAIQPCKPTFVQARDAIIDADMNLTKGSNRCEIWKAFAKR</sequence>
<feature type="signal peptide" evidence="2">
    <location>
        <begin position="1"/>
        <end position="20"/>
    </location>
</feature>
<feature type="propeptide" id="PRO_0000380880" evidence="1">
    <location>
        <begin position="21"/>
        <end position="244"/>
    </location>
</feature>
<feature type="chain" id="PRO_0000380881" description="Extracellular metalloproteinase 5">
    <location>
        <begin position="245"/>
        <end position="608"/>
    </location>
</feature>
<feature type="active site" evidence="3">
    <location>
        <position position="428"/>
    </location>
</feature>
<feature type="binding site" evidence="3">
    <location>
        <position position="427"/>
    </location>
    <ligand>
        <name>Zn(2+)</name>
        <dbReference type="ChEBI" id="CHEBI:29105"/>
        <note>catalytic</note>
    </ligand>
</feature>
<feature type="binding site" evidence="3">
    <location>
        <position position="431"/>
    </location>
    <ligand>
        <name>Zn(2+)</name>
        <dbReference type="ChEBI" id="CHEBI:29105"/>
        <note>catalytic</note>
    </ligand>
</feature>
<feature type="glycosylation site" description="N-linked (GlcNAc...) asparagine" evidence="2">
    <location>
        <position position="285"/>
    </location>
</feature>
<feature type="glycosylation site" description="N-linked (GlcNAc...) asparagine" evidence="2">
    <location>
        <position position="591"/>
    </location>
</feature>
<proteinExistence type="inferred from homology"/>
<comment type="function">
    <text evidence="1">Secreted metalloproteinase probably acting as a virulence factor.</text>
</comment>
<comment type="cofactor">
    <cofactor evidence="1">
        <name>Zn(2+)</name>
        <dbReference type="ChEBI" id="CHEBI:29105"/>
    </cofactor>
    <text evidence="1">Binds 1 zinc ion per subunit.</text>
</comment>
<comment type="subcellular location">
    <subcellularLocation>
        <location evidence="1">Secreted</location>
    </subcellularLocation>
</comment>
<comment type="similarity">
    <text evidence="4">Belongs to the peptidase M36 family.</text>
</comment>
<comment type="sequence caution" evidence="4">
    <conflict type="erroneous initiation">
        <sequence resource="EMBL-CDS" id="ABQ96590"/>
    </conflict>
</comment>
<dbReference type="EC" id="3.4.24.-"/>
<dbReference type="EMBL" id="EF490686">
    <property type="protein sequence ID" value="ABQ96590.1"/>
    <property type="status" value="ALT_INIT"/>
    <property type="molecule type" value="Genomic_DNA"/>
</dbReference>
<dbReference type="SMR" id="A5YCB9"/>
<dbReference type="MEROPS" id="M36.001"/>
<dbReference type="GlyCosmos" id="A5YCB9">
    <property type="glycosylation" value="2 sites, No reported glycans"/>
</dbReference>
<dbReference type="VEuPathDB" id="FungiDB:TESG_03496"/>
<dbReference type="GO" id="GO:0005576">
    <property type="term" value="C:extracellular region"/>
    <property type="evidence" value="ECO:0007669"/>
    <property type="project" value="UniProtKB-SubCell"/>
</dbReference>
<dbReference type="GO" id="GO:0004222">
    <property type="term" value="F:metalloendopeptidase activity"/>
    <property type="evidence" value="ECO:0007669"/>
    <property type="project" value="InterPro"/>
</dbReference>
<dbReference type="GO" id="GO:0008270">
    <property type="term" value="F:zinc ion binding"/>
    <property type="evidence" value="ECO:0007669"/>
    <property type="project" value="InterPro"/>
</dbReference>
<dbReference type="GO" id="GO:0006508">
    <property type="term" value="P:proteolysis"/>
    <property type="evidence" value="ECO:0007669"/>
    <property type="project" value="UniProtKB-KW"/>
</dbReference>
<dbReference type="CDD" id="cd09596">
    <property type="entry name" value="M36"/>
    <property type="match status" value="1"/>
</dbReference>
<dbReference type="Gene3D" id="3.10.170.10">
    <property type="match status" value="1"/>
</dbReference>
<dbReference type="Gene3D" id="1.10.390.10">
    <property type="entry name" value="Neutral Protease Domain 2"/>
    <property type="match status" value="1"/>
</dbReference>
<dbReference type="InterPro" id="IPR011096">
    <property type="entry name" value="FTP_domain"/>
</dbReference>
<dbReference type="InterPro" id="IPR050371">
    <property type="entry name" value="Fungal_virulence_M36"/>
</dbReference>
<dbReference type="InterPro" id="IPR001842">
    <property type="entry name" value="Peptidase_M36"/>
</dbReference>
<dbReference type="InterPro" id="IPR027268">
    <property type="entry name" value="Peptidase_M4/M1_CTD_sf"/>
</dbReference>
<dbReference type="PANTHER" id="PTHR33478">
    <property type="entry name" value="EXTRACELLULAR METALLOPROTEINASE MEP"/>
    <property type="match status" value="1"/>
</dbReference>
<dbReference type="PANTHER" id="PTHR33478:SF1">
    <property type="entry name" value="EXTRACELLULAR METALLOPROTEINASE MEP"/>
    <property type="match status" value="1"/>
</dbReference>
<dbReference type="Pfam" id="PF07504">
    <property type="entry name" value="FTP"/>
    <property type="match status" value="1"/>
</dbReference>
<dbReference type="Pfam" id="PF02128">
    <property type="entry name" value="Peptidase_M36"/>
    <property type="match status" value="1"/>
</dbReference>
<dbReference type="PRINTS" id="PR00999">
    <property type="entry name" value="FUNGALYSIN"/>
</dbReference>
<dbReference type="SUPFAM" id="SSF55486">
    <property type="entry name" value="Metalloproteases ('zincins'), catalytic domain"/>
    <property type="match status" value="1"/>
</dbReference>
<dbReference type="PROSITE" id="PS00142">
    <property type="entry name" value="ZINC_PROTEASE"/>
    <property type="match status" value="1"/>
</dbReference>
<keyword id="KW-0325">Glycoprotein</keyword>
<keyword id="KW-0378">Hydrolase</keyword>
<keyword id="KW-0479">Metal-binding</keyword>
<keyword id="KW-0482">Metalloprotease</keyword>
<keyword id="KW-0645">Protease</keyword>
<keyword id="KW-0964">Secreted</keyword>
<keyword id="KW-0732">Signal</keyword>
<keyword id="KW-0843">Virulence</keyword>
<keyword id="KW-0862">Zinc</keyword>
<keyword id="KW-0865">Zymogen</keyword>
<evidence type="ECO:0000250" key="1"/>
<evidence type="ECO:0000255" key="2"/>
<evidence type="ECO:0000255" key="3">
    <source>
        <dbReference type="PROSITE-ProRule" id="PRU10095"/>
    </source>
</evidence>
<evidence type="ECO:0000305" key="4"/>